<feature type="chain" id="PRO_0000210078" description="p-hydroxybenzoic acid efflux pump subunit AaeB">
    <location>
        <begin position="1"/>
        <end position="655"/>
    </location>
</feature>
<feature type="topological domain" description="Periplasmic" evidence="1">
    <location>
        <begin position="1"/>
        <end position="12"/>
    </location>
</feature>
<feature type="transmembrane region" description="Helical" evidence="2">
    <location>
        <begin position="13"/>
        <end position="33"/>
    </location>
</feature>
<feature type="topological domain" description="Cytoplasmic" evidence="1">
    <location>
        <begin position="34"/>
        <end position="37"/>
    </location>
</feature>
<feature type="transmembrane region" description="Helical" evidence="2">
    <location>
        <begin position="38"/>
        <end position="58"/>
    </location>
</feature>
<feature type="topological domain" description="Periplasmic" evidence="1">
    <location>
        <begin position="59"/>
        <end position="68"/>
    </location>
</feature>
<feature type="transmembrane region" description="Helical" evidence="2">
    <location>
        <begin position="69"/>
        <end position="89"/>
    </location>
</feature>
<feature type="topological domain" description="Cytoplasmic" evidence="1">
    <location>
        <begin position="90"/>
        <end position="92"/>
    </location>
</feature>
<feature type="transmembrane region" description="Helical" evidence="2">
    <location>
        <begin position="93"/>
        <end position="113"/>
    </location>
</feature>
<feature type="topological domain" description="Periplasmic" evidence="1">
    <location>
        <begin position="114"/>
        <end position="120"/>
    </location>
</feature>
<feature type="transmembrane region" description="Helical" evidence="2">
    <location>
        <begin position="121"/>
        <end position="141"/>
    </location>
</feature>
<feature type="topological domain" description="Cytoplasmic" evidence="1">
    <location>
        <begin position="142"/>
        <end position="151"/>
    </location>
</feature>
<feature type="transmembrane region" description="Helical" evidence="2">
    <location>
        <begin position="152"/>
        <end position="172"/>
    </location>
</feature>
<feature type="topological domain" description="Periplasmic" evidence="1">
    <location>
        <begin position="173"/>
        <end position="369"/>
    </location>
</feature>
<feature type="transmembrane region" description="Helical" evidence="2">
    <location>
        <begin position="370"/>
        <end position="390"/>
    </location>
</feature>
<feature type="topological domain" description="Cytoplasmic" evidence="1">
    <location>
        <begin position="391"/>
        <end position="406"/>
    </location>
</feature>
<feature type="transmembrane region" description="Helical" evidence="2">
    <location>
        <begin position="407"/>
        <end position="427"/>
    </location>
</feature>
<feature type="topological domain" description="Periplasmic" evidence="1">
    <location>
        <begin position="428"/>
        <end position="430"/>
    </location>
</feature>
<feature type="transmembrane region" description="Helical" evidence="2">
    <location>
        <begin position="431"/>
        <end position="451"/>
    </location>
</feature>
<feature type="topological domain" description="Cytoplasmic" evidence="1">
    <location>
        <begin position="452"/>
        <end position="458"/>
    </location>
</feature>
<feature type="transmembrane region" description="Helical" evidence="2">
    <location>
        <begin position="459"/>
        <end position="479"/>
    </location>
</feature>
<feature type="topological domain" description="Periplasmic" evidence="1">
    <location>
        <begin position="480"/>
        <end position="481"/>
    </location>
</feature>
<feature type="transmembrane region" description="Helical" evidence="2">
    <location>
        <begin position="482"/>
        <end position="502"/>
    </location>
</feature>
<feature type="topological domain" description="Cytoplasmic" evidence="1">
    <location>
        <begin position="503"/>
        <end position="655"/>
    </location>
</feature>
<protein>
    <recommendedName>
        <fullName evidence="2">p-hydroxybenzoic acid efflux pump subunit AaeB</fullName>
        <shortName evidence="2">pHBA efflux pump protein B</shortName>
    </recommendedName>
</protein>
<comment type="function">
    <text evidence="2">Forms an efflux pump with AaeA. Could function as a metabolic relief valve, allowing to eliminate certain compounds when they accumulate to high levels in the cell.</text>
</comment>
<comment type="subcellular location">
    <subcellularLocation>
        <location evidence="2">Cell inner membrane</location>
        <topology evidence="2">Multi-pass membrane protein</topology>
    </subcellularLocation>
</comment>
<comment type="induction">
    <text evidence="2">Positively coregulated with aaeA and aaeX by AaeR.</text>
</comment>
<comment type="similarity">
    <text evidence="2">Belongs to the aromatic acid exporter ArAE (TC 2.A.85) family.</text>
</comment>
<keyword id="KW-0997">Cell inner membrane</keyword>
<keyword id="KW-1003">Cell membrane</keyword>
<keyword id="KW-0472">Membrane</keyword>
<keyword id="KW-1185">Reference proteome</keyword>
<keyword id="KW-0812">Transmembrane</keyword>
<keyword id="KW-1133">Transmembrane helix</keyword>
<keyword id="KW-0813">Transport</keyword>
<reference key="1">
    <citation type="journal article" date="2002" name="Proc. Natl. Acad. Sci. U.S.A.">
        <title>Extensive mosaic structure revealed by the complete genome sequence of uropathogenic Escherichia coli.</title>
        <authorList>
            <person name="Welch R.A."/>
            <person name="Burland V."/>
            <person name="Plunkett G. III"/>
            <person name="Redford P."/>
            <person name="Roesch P."/>
            <person name="Rasko D."/>
            <person name="Buckles E.L."/>
            <person name="Liou S.-R."/>
            <person name="Boutin A."/>
            <person name="Hackett J."/>
            <person name="Stroud D."/>
            <person name="Mayhew G.F."/>
            <person name="Rose D.J."/>
            <person name="Zhou S."/>
            <person name="Schwartz D.C."/>
            <person name="Perna N.T."/>
            <person name="Mobley H.L.T."/>
            <person name="Donnenberg M.S."/>
            <person name="Blattner F.R."/>
        </authorList>
    </citation>
    <scope>NUCLEOTIDE SEQUENCE [LARGE SCALE GENOMIC DNA]</scope>
    <source>
        <strain>CFT073 / ATCC 700928 / UPEC</strain>
    </source>
</reference>
<evidence type="ECO:0000255" key="1"/>
<evidence type="ECO:0000255" key="2">
    <source>
        <dbReference type="HAMAP-Rule" id="MF_01545"/>
    </source>
</evidence>
<dbReference type="EMBL" id="AE014075">
    <property type="protein sequence ID" value="AAN82435.1"/>
    <property type="molecule type" value="Genomic_DNA"/>
</dbReference>
<dbReference type="RefSeq" id="WP_000510958.1">
    <property type="nucleotide sequence ID" value="NZ_CP051263.1"/>
</dbReference>
<dbReference type="SMR" id="Q8FD51"/>
<dbReference type="STRING" id="199310.c3995"/>
<dbReference type="KEGG" id="ecc:c3995"/>
<dbReference type="eggNOG" id="COG1289">
    <property type="taxonomic scope" value="Bacteria"/>
</dbReference>
<dbReference type="HOGENOM" id="CLU_027647_0_0_6"/>
<dbReference type="BioCyc" id="ECOL199310:C3995-MONOMER"/>
<dbReference type="Proteomes" id="UP000001410">
    <property type="component" value="Chromosome"/>
</dbReference>
<dbReference type="GO" id="GO:0005886">
    <property type="term" value="C:plasma membrane"/>
    <property type="evidence" value="ECO:0007669"/>
    <property type="project" value="UniProtKB-SubCell"/>
</dbReference>
<dbReference type="GO" id="GO:0022857">
    <property type="term" value="F:transmembrane transporter activity"/>
    <property type="evidence" value="ECO:0007669"/>
    <property type="project" value="UniProtKB-UniRule"/>
</dbReference>
<dbReference type="GO" id="GO:0046942">
    <property type="term" value="P:carboxylic acid transport"/>
    <property type="evidence" value="ECO:0007669"/>
    <property type="project" value="InterPro"/>
</dbReference>
<dbReference type="HAMAP" id="MF_01545">
    <property type="entry name" value="AaeB"/>
    <property type="match status" value="1"/>
</dbReference>
<dbReference type="InterPro" id="IPR006726">
    <property type="entry name" value="PHBA_efflux_AaeB/fusaric-R"/>
</dbReference>
<dbReference type="InterPro" id="IPR023706">
    <property type="entry name" value="PHBA_efflux_pump_AaeB"/>
</dbReference>
<dbReference type="NCBIfam" id="NF007916">
    <property type="entry name" value="PRK10631.1"/>
    <property type="match status" value="1"/>
</dbReference>
<dbReference type="PANTHER" id="PTHR30509:SF9">
    <property type="entry name" value="MULTIDRUG RESISTANCE PROTEIN MDTO"/>
    <property type="match status" value="1"/>
</dbReference>
<dbReference type="PANTHER" id="PTHR30509">
    <property type="entry name" value="P-HYDROXYBENZOIC ACID EFFLUX PUMP SUBUNIT-RELATED"/>
    <property type="match status" value="1"/>
</dbReference>
<dbReference type="Pfam" id="PF04632">
    <property type="entry name" value="FUSC"/>
    <property type="match status" value="1"/>
</dbReference>
<gene>
    <name evidence="2" type="primary">aaeB</name>
    <name type="ordered locus">c3995</name>
</gene>
<name>AAEB_ECOL6</name>
<organism>
    <name type="scientific">Escherichia coli O6:H1 (strain CFT073 / ATCC 700928 / UPEC)</name>
    <dbReference type="NCBI Taxonomy" id="199310"/>
    <lineage>
        <taxon>Bacteria</taxon>
        <taxon>Pseudomonadati</taxon>
        <taxon>Pseudomonadota</taxon>
        <taxon>Gammaproteobacteria</taxon>
        <taxon>Enterobacterales</taxon>
        <taxon>Enterobacteriaceae</taxon>
        <taxon>Escherichia</taxon>
    </lineage>
</organism>
<proteinExistence type="inferred from homology"/>
<sequence>MGIFSIANQHIRFAVKLATAIVLALFVGFHFQLETPRWAVLTAAIVAAGPAFAAGGEPYSGAIRYRGFLRIIGTFIGCIAGLVIIIAMIRAPLLMILVCCIWAGFCTWISSLVRIENSYAWGLAGYTALIIVITIQPEPLLTPQFAVERCSEIVIGIVCAIMADLLFSPRSIKQEVDRELESLLVAQYQLMQLCIKHGDGEVVDKAWGDLVRRTTALQGMRSNLNMESSRWARANRRLKAINTLSLTLITQSCETYLIQNTRPELITDTFREFFDTPVETAQDVHKQLKRLRRVIAWTGERETPVTIYSWVAAATRYQLLKRGVISNTKINATEEEILQGEPEVKVESAERHHAMVNFWRTTLSCILGTLFWLWTGWTSGSGAMVMIAVVTSLAMRLPNPRMVAIDFIYGTLAALPLGLLYFLVIIPNTQQSMLLLCISLAVLGFFLGIEVQKRRLGSMGALASTINIIVLDNPMTFHFSQFLDSALGQIVGCVLAFTVILLVRDKSRDRTGRVLLNQFVSAAVSAMTTNVARRKENHLPALYQQLFLLMNKFPGDLPKFRLALTMIIAHQRLRDAPIPVNEDLSAFHRQMRRTADHVISARSDDKRRRYFGQLLEELEIDQEKLRIWQAPPQVTEPVHRLTGMLHKYQHALTDS</sequence>
<accession>Q8FD51</accession>